<reference key="1">
    <citation type="journal article" date="2005" name="Proc. Natl. Acad. Sci. U.S.A.">
        <title>The psychrophilic lifestyle as revealed by the genome sequence of Colwellia psychrerythraea 34H through genomic and proteomic analyses.</title>
        <authorList>
            <person name="Methe B.A."/>
            <person name="Nelson K.E."/>
            <person name="Deming J.W."/>
            <person name="Momen B."/>
            <person name="Melamud E."/>
            <person name="Zhang X."/>
            <person name="Moult J."/>
            <person name="Madupu R."/>
            <person name="Nelson W.C."/>
            <person name="Dodson R.J."/>
            <person name="Brinkac L.M."/>
            <person name="Daugherty S.C."/>
            <person name="Durkin A.S."/>
            <person name="DeBoy R.T."/>
            <person name="Kolonay J.F."/>
            <person name="Sullivan S.A."/>
            <person name="Zhou L."/>
            <person name="Davidsen T.M."/>
            <person name="Wu M."/>
            <person name="Huston A.L."/>
            <person name="Lewis M."/>
            <person name="Weaver B."/>
            <person name="Weidman J.F."/>
            <person name="Khouri H."/>
            <person name="Utterback T.R."/>
            <person name="Feldblyum T.V."/>
            <person name="Fraser C.M."/>
        </authorList>
    </citation>
    <scope>NUCLEOTIDE SEQUENCE [LARGE SCALE GENOMIC DNA]</scope>
    <source>
        <strain>34H / ATCC BAA-681</strain>
    </source>
</reference>
<sequence length="214" mass="23095">MRIVLLGAPGAGKGTQAQFLMAKFGIPQISTGDMLRAAIKAGSELGNKAKAVMDAGQLVSDDLIIGLVKERVAQEDCKAGFLLDGFPRTIPQADAMKESGIVVDHVLEFDVPDEVIVERMAGRRVHSGSGRVYHLVYNPPKVEGKDDVSGDDLSIRPDDEEATVRKRLAIYHEQTKPLVDFYQAEAKSGSCSYLTIDGTQAVEKVNQLLSAQLA</sequence>
<accession>Q47XA8</accession>
<proteinExistence type="inferred from homology"/>
<gene>
    <name evidence="1" type="primary">adk</name>
    <name type="ordered locus">CPS_3900</name>
</gene>
<keyword id="KW-0067">ATP-binding</keyword>
<keyword id="KW-0963">Cytoplasm</keyword>
<keyword id="KW-0418">Kinase</keyword>
<keyword id="KW-0545">Nucleotide biosynthesis</keyword>
<keyword id="KW-0547">Nucleotide-binding</keyword>
<keyword id="KW-0808">Transferase</keyword>
<feature type="chain" id="PRO_1000058817" description="Adenylate kinase">
    <location>
        <begin position="1"/>
        <end position="214"/>
    </location>
</feature>
<feature type="region of interest" description="NMP" evidence="1">
    <location>
        <begin position="30"/>
        <end position="59"/>
    </location>
</feature>
<feature type="region of interest" description="LID" evidence="1">
    <location>
        <begin position="122"/>
        <end position="159"/>
    </location>
</feature>
<feature type="binding site" evidence="1">
    <location>
        <begin position="10"/>
        <end position="15"/>
    </location>
    <ligand>
        <name>ATP</name>
        <dbReference type="ChEBI" id="CHEBI:30616"/>
    </ligand>
</feature>
<feature type="binding site" evidence="1">
    <location>
        <position position="31"/>
    </location>
    <ligand>
        <name>AMP</name>
        <dbReference type="ChEBI" id="CHEBI:456215"/>
    </ligand>
</feature>
<feature type="binding site" evidence="1">
    <location>
        <position position="36"/>
    </location>
    <ligand>
        <name>AMP</name>
        <dbReference type="ChEBI" id="CHEBI:456215"/>
    </ligand>
</feature>
<feature type="binding site" evidence="1">
    <location>
        <begin position="57"/>
        <end position="59"/>
    </location>
    <ligand>
        <name>AMP</name>
        <dbReference type="ChEBI" id="CHEBI:456215"/>
    </ligand>
</feature>
<feature type="binding site" evidence="1">
    <location>
        <begin position="85"/>
        <end position="88"/>
    </location>
    <ligand>
        <name>AMP</name>
        <dbReference type="ChEBI" id="CHEBI:456215"/>
    </ligand>
</feature>
<feature type="binding site" evidence="1">
    <location>
        <position position="92"/>
    </location>
    <ligand>
        <name>AMP</name>
        <dbReference type="ChEBI" id="CHEBI:456215"/>
    </ligand>
</feature>
<feature type="binding site" evidence="1">
    <location>
        <position position="123"/>
    </location>
    <ligand>
        <name>ATP</name>
        <dbReference type="ChEBI" id="CHEBI:30616"/>
    </ligand>
</feature>
<feature type="binding site" evidence="1">
    <location>
        <begin position="132"/>
        <end position="133"/>
    </location>
    <ligand>
        <name>ATP</name>
        <dbReference type="ChEBI" id="CHEBI:30616"/>
    </ligand>
</feature>
<feature type="binding site" evidence="1">
    <location>
        <position position="156"/>
    </location>
    <ligand>
        <name>AMP</name>
        <dbReference type="ChEBI" id="CHEBI:456215"/>
    </ligand>
</feature>
<feature type="binding site" evidence="1">
    <location>
        <position position="167"/>
    </location>
    <ligand>
        <name>AMP</name>
        <dbReference type="ChEBI" id="CHEBI:456215"/>
    </ligand>
</feature>
<feature type="binding site" evidence="1">
    <location>
        <position position="200"/>
    </location>
    <ligand>
        <name>ATP</name>
        <dbReference type="ChEBI" id="CHEBI:30616"/>
    </ligand>
</feature>
<organism>
    <name type="scientific">Colwellia psychrerythraea (strain 34H / ATCC BAA-681)</name>
    <name type="common">Vibrio psychroerythus</name>
    <dbReference type="NCBI Taxonomy" id="167879"/>
    <lineage>
        <taxon>Bacteria</taxon>
        <taxon>Pseudomonadati</taxon>
        <taxon>Pseudomonadota</taxon>
        <taxon>Gammaproteobacteria</taxon>
        <taxon>Alteromonadales</taxon>
        <taxon>Colwelliaceae</taxon>
        <taxon>Colwellia</taxon>
    </lineage>
</organism>
<evidence type="ECO:0000255" key="1">
    <source>
        <dbReference type="HAMAP-Rule" id="MF_00235"/>
    </source>
</evidence>
<name>KAD_COLP3</name>
<protein>
    <recommendedName>
        <fullName evidence="1">Adenylate kinase</fullName>
        <shortName evidence="1">AK</shortName>
        <ecNumber evidence="1">2.7.4.3</ecNumber>
    </recommendedName>
    <alternativeName>
        <fullName evidence="1">ATP-AMP transphosphorylase</fullName>
    </alternativeName>
    <alternativeName>
        <fullName evidence="1">ATP:AMP phosphotransferase</fullName>
    </alternativeName>
    <alternativeName>
        <fullName evidence="1">Adenylate monophosphate kinase</fullName>
    </alternativeName>
</protein>
<comment type="function">
    <text evidence="1">Catalyzes the reversible transfer of the terminal phosphate group between ATP and AMP. Plays an important role in cellular energy homeostasis and in adenine nucleotide metabolism.</text>
</comment>
<comment type="catalytic activity">
    <reaction evidence="1">
        <text>AMP + ATP = 2 ADP</text>
        <dbReference type="Rhea" id="RHEA:12973"/>
        <dbReference type="ChEBI" id="CHEBI:30616"/>
        <dbReference type="ChEBI" id="CHEBI:456215"/>
        <dbReference type="ChEBI" id="CHEBI:456216"/>
        <dbReference type="EC" id="2.7.4.3"/>
    </reaction>
</comment>
<comment type="pathway">
    <text evidence="1">Purine metabolism; AMP biosynthesis via salvage pathway; AMP from ADP: step 1/1.</text>
</comment>
<comment type="subunit">
    <text evidence="1">Monomer.</text>
</comment>
<comment type="subcellular location">
    <subcellularLocation>
        <location evidence="1">Cytoplasm</location>
    </subcellularLocation>
</comment>
<comment type="domain">
    <text evidence="1">Consists of three domains, a large central CORE domain and two small peripheral domains, NMPbind and LID, which undergo movements during catalysis. The LID domain closes over the site of phosphoryl transfer upon ATP binding. Assembling and dissambling the active center during each catalytic cycle provides an effective means to prevent ATP hydrolysis.</text>
</comment>
<comment type="similarity">
    <text evidence="1">Belongs to the adenylate kinase family.</text>
</comment>
<dbReference type="EC" id="2.7.4.3" evidence="1"/>
<dbReference type="EMBL" id="CP000083">
    <property type="protein sequence ID" value="AAZ25840.1"/>
    <property type="molecule type" value="Genomic_DNA"/>
</dbReference>
<dbReference type="RefSeq" id="WP_011044648.1">
    <property type="nucleotide sequence ID" value="NC_003910.7"/>
</dbReference>
<dbReference type="SMR" id="Q47XA8"/>
<dbReference type="STRING" id="167879.CPS_3900"/>
<dbReference type="KEGG" id="cps:CPS_3900"/>
<dbReference type="eggNOG" id="COG0563">
    <property type="taxonomic scope" value="Bacteria"/>
</dbReference>
<dbReference type="HOGENOM" id="CLU_032354_1_2_6"/>
<dbReference type="UniPathway" id="UPA00588">
    <property type="reaction ID" value="UER00649"/>
</dbReference>
<dbReference type="Proteomes" id="UP000000547">
    <property type="component" value="Chromosome"/>
</dbReference>
<dbReference type="GO" id="GO:0005737">
    <property type="term" value="C:cytoplasm"/>
    <property type="evidence" value="ECO:0007669"/>
    <property type="project" value="UniProtKB-SubCell"/>
</dbReference>
<dbReference type="GO" id="GO:0004017">
    <property type="term" value="F:adenylate kinase activity"/>
    <property type="evidence" value="ECO:0007669"/>
    <property type="project" value="UniProtKB-UniRule"/>
</dbReference>
<dbReference type="GO" id="GO:0005524">
    <property type="term" value="F:ATP binding"/>
    <property type="evidence" value="ECO:0007669"/>
    <property type="project" value="UniProtKB-UniRule"/>
</dbReference>
<dbReference type="GO" id="GO:0044209">
    <property type="term" value="P:AMP salvage"/>
    <property type="evidence" value="ECO:0007669"/>
    <property type="project" value="UniProtKB-UniRule"/>
</dbReference>
<dbReference type="CDD" id="cd01428">
    <property type="entry name" value="ADK"/>
    <property type="match status" value="1"/>
</dbReference>
<dbReference type="FunFam" id="3.40.50.300:FF:000106">
    <property type="entry name" value="Adenylate kinase mitochondrial"/>
    <property type="match status" value="1"/>
</dbReference>
<dbReference type="Gene3D" id="3.40.50.300">
    <property type="entry name" value="P-loop containing nucleotide triphosphate hydrolases"/>
    <property type="match status" value="1"/>
</dbReference>
<dbReference type="HAMAP" id="MF_00235">
    <property type="entry name" value="Adenylate_kinase_Adk"/>
    <property type="match status" value="1"/>
</dbReference>
<dbReference type="InterPro" id="IPR006259">
    <property type="entry name" value="Adenyl_kin_sub"/>
</dbReference>
<dbReference type="InterPro" id="IPR000850">
    <property type="entry name" value="Adenylat/UMP-CMP_kin"/>
</dbReference>
<dbReference type="InterPro" id="IPR033690">
    <property type="entry name" value="Adenylat_kinase_CS"/>
</dbReference>
<dbReference type="InterPro" id="IPR007862">
    <property type="entry name" value="Adenylate_kinase_lid-dom"/>
</dbReference>
<dbReference type="InterPro" id="IPR027417">
    <property type="entry name" value="P-loop_NTPase"/>
</dbReference>
<dbReference type="NCBIfam" id="TIGR01351">
    <property type="entry name" value="adk"/>
    <property type="match status" value="1"/>
</dbReference>
<dbReference type="NCBIfam" id="NF001379">
    <property type="entry name" value="PRK00279.1-1"/>
    <property type="match status" value="1"/>
</dbReference>
<dbReference type="NCBIfam" id="NF001380">
    <property type="entry name" value="PRK00279.1-2"/>
    <property type="match status" value="1"/>
</dbReference>
<dbReference type="NCBIfam" id="NF001381">
    <property type="entry name" value="PRK00279.1-3"/>
    <property type="match status" value="1"/>
</dbReference>
<dbReference type="NCBIfam" id="NF011100">
    <property type="entry name" value="PRK14527.1"/>
    <property type="match status" value="1"/>
</dbReference>
<dbReference type="PANTHER" id="PTHR23359">
    <property type="entry name" value="NUCLEOTIDE KINASE"/>
    <property type="match status" value="1"/>
</dbReference>
<dbReference type="Pfam" id="PF00406">
    <property type="entry name" value="ADK"/>
    <property type="match status" value="1"/>
</dbReference>
<dbReference type="Pfam" id="PF05191">
    <property type="entry name" value="ADK_lid"/>
    <property type="match status" value="1"/>
</dbReference>
<dbReference type="PRINTS" id="PR00094">
    <property type="entry name" value="ADENYLTKNASE"/>
</dbReference>
<dbReference type="SUPFAM" id="SSF52540">
    <property type="entry name" value="P-loop containing nucleoside triphosphate hydrolases"/>
    <property type="match status" value="1"/>
</dbReference>
<dbReference type="PROSITE" id="PS00113">
    <property type="entry name" value="ADENYLATE_KINASE"/>
    <property type="match status" value="1"/>
</dbReference>